<comment type="function">
    <text>Because S100A10 induces the dimerization of ANXA2/p36, it may function as a regulator of protein phosphorylation in that the ANXA2 monomer is the preferred target (in vitro) of tyrosine-specific kinase.</text>
</comment>
<comment type="subunit">
    <text evidence="1 2 3">Heterotetramer containing 2 light chains of S100A10/p11 and 2 heavy chains of ANXA2/p36 (PubMed:9886297). Interacts with SCN10A (By similarity). Interacts with TASOR (By similarity).</text>
</comment>
<comment type="interaction">
    <interactant intactId="EBI-717048">
        <id>P60903</id>
    </interactant>
    <interactant intactId="EBI-2555881">
        <id>Q09666</id>
        <label>AHNAK</label>
    </interactant>
    <organismsDiffer>false</organismsDiffer>
    <experiments>2</experiments>
</comment>
<comment type="interaction">
    <interactant intactId="EBI-717048">
        <id>P60903</id>
    </interactant>
    <interactant intactId="EBI-352622">
        <id>P07355</id>
        <label>ANXA2</label>
    </interactant>
    <organismsDiffer>false</organismsDiffer>
    <experiments>6</experiments>
</comment>
<comment type="interaction">
    <interactant intactId="EBI-717048">
        <id>P60903</id>
    </interactant>
    <interactant intactId="EBI-348022">
        <id>P46092</id>
        <label>CCR10</label>
    </interactant>
    <organismsDiffer>false</organismsDiffer>
    <experiments>5</experiments>
</comment>
<comment type="interaction">
    <interactant intactId="EBI-717048">
        <id>P60903</id>
    </interactant>
    <interactant intactId="EBI-1045161">
        <id>Q14527</id>
        <label>HLTF</label>
    </interactant>
    <organismsDiffer>false</organismsDiffer>
    <experiments>2</experiments>
</comment>
<comment type="interaction">
    <interactant intactId="EBI-717048">
        <id>P60903</id>
    </interactant>
    <interactant intactId="EBI-19046912">
        <id>Q8NB16-2</id>
        <label>MLKL</label>
    </interactant>
    <organismsDiffer>false</organismsDiffer>
    <experiments>3</experiments>
</comment>
<comment type="interaction">
    <interactant intactId="EBI-717048">
        <id>P60903</id>
    </interactant>
    <interactant intactId="EBI-10216569">
        <id>P60321</id>
        <label>NANOS2</label>
    </interactant>
    <organismsDiffer>false</organismsDiffer>
    <experiments>3</experiments>
</comment>
<comment type="interaction">
    <interactant intactId="EBI-717048">
        <id>P60903</id>
    </interactant>
    <interactant intactId="EBI-1044747">
        <id>P33764</id>
        <label>S100A3</label>
    </interactant>
    <organismsDiffer>false</organismsDiffer>
    <experiments>3</experiments>
</comment>
<comment type="interaction">
    <interactant intactId="EBI-717048">
        <id>P60903</id>
    </interactant>
    <interactant intactId="EBI-12198403">
        <id>Q8WXG8</id>
        <label>S100Z</label>
    </interactant>
    <organismsDiffer>false</organismsDiffer>
    <experiments>6</experiments>
</comment>
<comment type="interaction">
    <interactant intactId="EBI-717048">
        <id>P60903</id>
    </interactant>
    <interactant intactId="EBI-11723041">
        <id>Q8TD43</id>
        <label>TRPM4</label>
    </interactant>
    <organismsDiffer>false</organismsDiffer>
    <experiments>2</experiments>
</comment>
<comment type="interaction">
    <interactant intactId="EBI-717048">
        <id>P60903</id>
    </interactant>
    <interactant intactId="EBI-743272">
        <id>O75604</id>
        <label>USP2</label>
    </interactant>
    <organismsDiffer>false</organismsDiffer>
    <experiments>3</experiments>
</comment>
<comment type="interaction">
    <interactant intactId="EBI-717048">
        <id>P60903</id>
    </interactant>
    <interactant intactId="EBI-10183064">
        <id>Q8N5A5-2</id>
        <label>ZGPAT</label>
    </interactant>
    <organismsDiffer>false</organismsDiffer>
    <experiments>3</experiments>
</comment>
<comment type="miscellaneous">
    <text>Does not appear to bind calcium. Contains 2 ancestral calcium site related to EF-hand domains that have lost their ability to bind calcium.</text>
</comment>
<comment type="similarity">
    <text evidence="4">Belongs to the S-100 family.</text>
</comment>
<comment type="online information" name="Atlas of Genetics and Cytogenetics in Oncology and Haematology">
    <link uri="https://atlasgeneticsoncology.org/gene/44145/S100A10"/>
</comment>
<sequence length="97" mass="11203">MPSQMEHAMETMMFTFHKFAGDKGYLTKEDLRVLMEKEFPGFLENQKDPLAVDKIMKDLDQCRDGKVGFQSFFSLIAGLTIACNDYFVVHMKQKGKK</sequence>
<evidence type="ECO:0000250" key="1">
    <source>
        <dbReference type="UniProtKB" id="P05943"/>
    </source>
</evidence>
<evidence type="ECO:0000250" key="2">
    <source>
        <dbReference type="UniProtKB" id="P08207"/>
    </source>
</evidence>
<evidence type="ECO:0000269" key="3">
    <source>
    </source>
</evidence>
<evidence type="ECO:0000305" key="4"/>
<evidence type="ECO:0007744" key="5">
    <source>
    </source>
</evidence>
<evidence type="ECO:0007744" key="6">
    <source>
    </source>
</evidence>
<evidence type="ECO:0007829" key="7">
    <source>
        <dbReference type="PDB" id="1A4P"/>
    </source>
</evidence>
<evidence type="ECO:0007829" key="8">
    <source>
        <dbReference type="PDB" id="4HRE"/>
    </source>
</evidence>
<evidence type="ECO:0007829" key="9">
    <source>
        <dbReference type="PDB" id="4HRG"/>
    </source>
</evidence>
<accession>P60903</accession>
<accession>A8K4V8</accession>
<accession>P08206</accession>
<accession>Q5T1C5</accession>
<feature type="chain" id="PRO_0000144002" description="Protein S100-A10">
    <location>
        <begin position="1"/>
        <end position="97"/>
    </location>
</feature>
<feature type="region of interest" description="Ancestral calcium site">
    <location>
        <begin position="60"/>
        <end position="71"/>
    </location>
</feature>
<feature type="modified residue" description="N6-acetyllysine" evidence="5">
    <location>
        <position position="23"/>
    </location>
</feature>
<feature type="modified residue" description="N6-acetyllysine" evidence="5">
    <location>
        <position position="28"/>
    </location>
</feature>
<feature type="modified residue" description="N6-acetyllysine; alternate" evidence="5">
    <location>
        <position position="37"/>
    </location>
</feature>
<feature type="modified residue" description="N6-acetyllysine" evidence="5">
    <location>
        <position position="54"/>
    </location>
</feature>
<feature type="modified residue" description="N6-acetyllysine" evidence="5">
    <location>
        <position position="57"/>
    </location>
</feature>
<feature type="cross-link" description="Glycyl lysine isopeptide (Lys-Gly) (interchain with G-Cter in SUMO2); alternate" evidence="6">
    <location>
        <position position="37"/>
    </location>
</feature>
<feature type="helix" evidence="9">
    <location>
        <begin position="4"/>
        <end position="20"/>
    </location>
</feature>
<feature type="helix" evidence="9">
    <location>
        <begin position="21"/>
        <end position="23"/>
    </location>
</feature>
<feature type="strand" evidence="8">
    <location>
        <begin position="24"/>
        <end position="26"/>
    </location>
</feature>
<feature type="helix" evidence="9">
    <location>
        <begin position="28"/>
        <end position="38"/>
    </location>
</feature>
<feature type="helix" evidence="9">
    <location>
        <begin position="42"/>
        <end position="45"/>
    </location>
</feature>
<feature type="helix" evidence="9">
    <location>
        <begin position="51"/>
        <end position="57"/>
    </location>
</feature>
<feature type="strand" evidence="9">
    <location>
        <begin position="59"/>
        <end position="61"/>
    </location>
</feature>
<feature type="strand" evidence="7">
    <location>
        <begin position="63"/>
        <end position="65"/>
    </location>
</feature>
<feature type="helix" evidence="9">
    <location>
        <begin position="69"/>
        <end position="90"/>
    </location>
</feature>
<proteinExistence type="evidence at protein level"/>
<name>S10AA_HUMAN</name>
<gene>
    <name type="primary">S100A10</name>
    <name type="synonym">ANX2LG</name>
    <name type="synonym">CAL1L</name>
    <name type="synonym">CLP11</name>
</gene>
<reference key="1">
    <citation type="journal article" date="1991" name="Gene">
        <title>Primary structure of human, chicken, and Xenopus laevis p11, a cellular ligand of the Src-kinase substrate, annexin II.</title>
        <authorList>
            <person name="Kube E."/>
            <person name="Weber K."/>
            <person name="Gerke V."/>
        </authorList>
    </citation>
    <scope>NUCLEOTIDE SEQUENCE [MRNA]</scope>
</reference>
<reference key="2">
    <citation type="journal article" date="1992" name="Gene">
        <title>Cloning and characterization of the human gene encoding p11: structural similarity to other members of the S-100 gene family.</title>
        <authorList>
            <person name="Harder T."/>
            <person name="Kube E."/>
            <person name="Gerke V."/>
        </authorList>
    </citation>
    <scope>NUCLEOTIDE SEQUENCE [GENOMIC DNA]</scope>
</reference>
<reference key="3">
    <citation type="journal article" date="1992" name="Genomics">
        <title>cDNA sequence of human p11 calpactin I light chain.</title>
        <authorList>
            <person name="Dooley T.P."/>
            <person name="Weiland K.L."/>
            <person name="Simon M."/>
        </authorList>
    </citation>
    <scope>NUCLEOTIDE SEQUENCE [MRNA]</scope>
    <source>
        <tissue>Keratinocyte</tissue>
    </source>
</reference>
<reference key="4">
    <citation type="journal article" date="2004" name="Nat. Genet.">
        <title>Complete sequencing and characterization of 21,243 full-length human cDNAs.</title>
        <authorList>
            <person name="Ota T."/>
            <person name="Suzuki Y."/>
            <person name="Nishikawa T."/>
            <person name="Otsuki T."/>
            <person name="Sugiyama T."/>
            <person name="Irie R."/>
            <person name="Wakamatsu A."/>
            <person name="Hayashi K."/>
            <person name="Sato H."/>
            <person name="Nagai K."/>
            <person name="Kimura K."/>
            <person name="Makita H."/>
            <person name="Sekine M."/>
            <person name="Obayashi M."/>
            <person name="Nishi T."/>
            <person name="Shibahara T."/>
            <person name="Tanaka T."/>
            <person name="Ishii S."/>
            <person name="Yamamoto J."/>
            <person name="Saito K."/>
            <person name="Kawai Y."/>
            <person name="Isono Y."/>
            <person name="Nakamura Y."/>
            <person name="Nagahari K."/>
            <person name="Murakami K."/>
            <person name="Yasuda T."/>
            <person name="Iwayanagi T."/>
            <person name="Wagatsuma M."/>
            <person name="Shiratori A."/>
            <person name="Sudo H."/>
            <person name="Hosoiri T."/>
            <person name="Kaku Y."/>
            <person name="Kodaira H."/>
            <person name="Kondo H."/>
            <person name="Sugawara M."/>
            <person name="Takahashi M."/>
            <person name="Kanda K."/>
            <person name="Yokoi T."/>
            <person name="Furuya T."/>
            <person name="Kikkawa E."/>
            <person name="Omura Y."/>
            <person name="Abe K."/>
            <person name="Kamihara K."/>
            <person name="Katsuta N."/>
            <person name="Sato K."/>
            <person name="Tanikawa M."/>
            <person name="Yamazaki M."/>
            <person name="Ninomiya K."/>
            <person name="Ishibashi T."/>
            <person name="Yamashita H."/>
            <person name="Murakawa K."/>
            <person name="Fujimori K."/>
            <person name="Tanai H."/>
            <person name="Kimata M."/>
            <person name="Watanabe M."/>
            <person name="Hiraoka S."/>
            <person name="Chiba Y."/>
            <person name="Ishida S."/>
            <person name="Ono Y."/>
            <person name="Takiguchi S."/>
            <person name="Watanabe S."/>
            <person name="Yosida M."/>
            <person name="Hotuta T."/>
            <person name="Kusano J."/>
            <person name="Kanehori K."/>
            <person name="Takahashi-Fujii A."/>
            <person name="Hara H."/>
            <person name="Tanase T.-O."/>
            <person name="Nomura Y."/>
            <person name="Togiya S."/>
            <person name="Komai F."/>
            <person name="Hara R."/>
            <person name="Takeuchi K."/>
            <person name="Arita M."/>
            <person name="Imose N."/>
            <person name="Musashino K."/>
            <person name="Yuuki H."/>
            <person name="Oshima A."/>
            <person name="Sasaki N."/>
            <person name="Aotsuka S."/>
            <person name="Yoshikawa Y."/>
            <person name="Matsunawa H."/>
            <person name="Ichihara T."/>
            <person name="Shiohata N."/>
            <person name="Sano S."/>
            <person name="Moriya S."/>
            <person name="Momiyama H."/>
            <person name="Satoh N."/>
            <person name="Takami S."/>
            <person name="Terashima Y."/>
            <person name="Suzuki O."/>
            <person name="Nakagawa S."/>
            <person name="Senoh A."/>
            <person name="Mizoguchi H."/>
            <person name="Goto Y."/>
            <person name="Shimizu F."/>
            <person name="Wakebe H."/>
            <person name="Hishigaki H."/>
            <person name="Watanabe T."/>
            <person name="Sugiyama A."/>
            <person name="Takemoto M."/>
            <person name="Kawakami B."/>
            <person name="Yamazaki M."/>
            <person name="Watanabe K."/>
            <person name="Kumagai A."/>
            <person name="Itakura S."/>
            <person name="Fukuzumi Y."/>
            <person name="Fujimori Y."/>
            <person name="Komiyama M."/>
            <person name="Tashiro H."/>
            <person name="Tanigami A."/>
            <person name="Fujiwara T."/>
            <person name="Ono T."/>
            <person name="Yamada K."/>
            <person name="Fujii Y."/>
            <person name="Ozaki K."/>
            <person name="Hirao M."/>
            <person name="Ohmori Y."/>
            <person name="Kawabata A."/>
            <person name="Hikiji T."/>
            <person name="Kobatake N."/>
            <person name="Inagaki H."/>
            <person name="Ikema Y."/>
            <person name="Okamoto S."/>
            <person name="Okitani R."/>
            <person name="Kawakami T."/>
            <person name="Noguchi S."/>
            <person name="Itoh T."/>
            <person name="Shigeta K."/>
            <person name="Senba T."/>
            <person name="Matsumura K."/>
            <person name="Nakajima Y."/>
            <person name="Mizuno T."/>
            <person name="Morinaga M."/>
            <person name="Sasaki M."/>
            <person name="Togashi T."/>
            <person name="Oyama M."/>
            <person name="Hata H."/>
            <person name="Watanabe M."/>
            <person name="Komatsu T."/>
            <person name="Mizushima-Sugano J."/>
            <person name="Satoh T."/>
            <person name="Shirai Y."/>
            <person name="Takahashi Y."/>
            <person name="Nakagawa K."/>
            <person name="Okumura K."/>
            <person name="Nagase T."/>
            <person name="Nomura N."/>
            <person name="Kikuchi H."/>
            <person name="Masuho Y."/>
            <person name="Yamashita R."/>
            <person name="Nakai K."/>
            <person name="Yada T."/>
            <person name="Nakamura Y."/>
            <person name="Ohara O."/>
            <person name="Isogai T."/>
            <person name="Sugano S."/>
        </authorList>
    </citation>
    <scope>NUCLEOTIDE SEQUENCE [LARGE SCALE MRNA]</scope>
</reference>
<reference key="5">
    <citation type="journal article" date="2006" name="Nature">
        <title>The DNA sequence and biological annotation of human chromosome 1.</title>
        <authorList>
            <person name="Gregory S.G."/>
            <person name="Barlow K.F."/>
            <person name="McLay K.E."/>
            <person name="Kaul R."/>
            <person name="Swarbreck D."/>
            <person name="Dunham A."/>
            <person name="Scott C.E."/>
            <person name="Howe K.L."/>
            <person name="Woodfine K."/>
            <person name="Spencer C.C.A."/>
            <person name="Jones M.C."/>
            <person name="Gillson C."/>
            <person name="Searle S."/>
            <person name="Zhou Y."/>
            <person name="Kokocinski F."/>
            <person name="McDonald L."/>
            <person name="Evans R."/>
            <person name="Phillips K."/>
            <person name="Atkinson A."/>
            <person name="Cooper R."/>
            <person name="Jones C."/>
            <person name="Hall R.E."/>
            <person name="Andrews T.D."/>
            <person name="Lloyd C."/>
            <person name="Ainscough R."/>
            <person name="Almeida J.P."/>
            <person name="Ambrose K.D."/>
            <person name="Anderson F."/>
            <person name="Andrew R.W."/>
            <person name="Ashwell R.I.S."/>
            <person name="Aubin K."/>
            <person name="Babbage A.K."/>
            <person name="Bagguley C.L."/>
            <person name="Bailey J."/>
            <person name="Beasley H."/>
            <person name="Bethel G."/>
            <person name="Bird C.P."/>
            <person name="Bray-Allen S."/>
            <person name="Brown J.Y."/>
            <person name="Brown A.J."/>
            <person name="Buckley D."/>
            <person name="Burton J."/>
            <person name="Bye J."/>
            <person name="Carder C."/>
            <person name="Chapman J.C."/>
            <person name="Clark S.Y."/>
            <person name="Clarke G."/>
            <person name="Clee C."/>
            <person name="Cobley V."/>
            <person name="Collier R.E."/>
            <person name="Corby N."/>
            <person name="Coville G.J."/>
            <person name="Davies J."/>
            <person name="Deadman R."/>
            <person name="Dunn M."/>
            <person name="Earthrowl M."/>
            <person name="Ellington A.G."/>
            <person name="Errington H."/>
            <person name="Frankish A."/>
            <person name="Frankland J."/>
            <person name="French L."/>
            <person name="Garner P."/>
            <person name="Garnett J."/>
            <person name="Gay L."/>
            <person name="Ghori M.R.J."/>
            <person name="Gibson R."/>
            <person name="Gilby L.M."/>
            <person name="Gillett W."/>
            <person name="Glithero R.J."/>
            <person name="Grafham D.V."/>
            <person name="Griffiths C."/>
            <person name="Griffiths-Jones S."/>
            <person name="Grocock R."/>
            <person name="Hammond S."/>
            <person name="Harrison E.S.I."/>
            <person name="Hart E."/>
            <person name="Haugen E."/>
            <person name="Heath P.D."/>
            <person name="Holmes S."/>
            <person name="Holt K."/>
            <person name="Howden P.J."/>
            <person name="Hunt A.R."/>
            <person name="Hunt S.E."/>
            <person name="Hunter G."/>
            <person name="Isherwood J."/>
            <person name="James R."/>
            <person name="Johnson C."/>
            <person name="Johnson D."/>
            <person name="Joy A."/>
            <person name="Kay M."/>
            <person name="Kershaw J.K."/>
            <person name="Kibukawa M."/>
            <person name="Kimberley A.M."/>
            <person name="King A."/>
            <person name="Knights A.J."/>
            <person name="Lad H."/>
            <person name="Laird G."/>
            <person name="Lawlor S."/>
            <person name="Leongamornlert D.A."/>
            <person name="Lloyd D.M."/>
            <person name="Loveland J."/>
            <person name="Lovell J."/>
            <person name="Lush M.J."/>
            <person name="Lyne R."/>
            <person name="Martin S."/>
            <person name="Mashreghi-Mohammadi M."/>
            <person name="Matthews L."/>
            <person name="Matthews N.S.W."/>
            <person name="McLaren S."/>
            <person name="Milne S."/>
            <person name="Mistry S."/>
            <person name="Moore M.J.F."/>
            <person name="Nickerson T."/>
            <person name="O'Dell C.N."/>
            <person name="Oliver K."/>
            <person name="Palmeiri A."/>
            <person name="Palmer S.A."/>
            <person name="Parker A."/>
            <person name="Patel D."/>
            <person name="Pearce A.V."/>
            <person name="Peck A.I."/>
            <person name="Pelan S."/>
            <person name="Phelps K."/>
            <person name="Phillimore B.J."/>
            <person name="Plumb R."/>
            <person name="Rajan J."/>
            <person name="Raymond C."/>
            <person name="Rouse G."/>
            <person name="Saenphimmachak C."/>
            <person name="Sehra H.K."/>
            <person name="Sheridan E."/>
            <person name="Shownkeen R."/>
            <person name="Sims S."/>
            <person name="Skuce C.D."/>
            <person name="Smith M."/>
            <person name="Steward C."/>
            <person name="Subramanian S."/>
            <person name="Sycamore N."/>
            <person name="Tracey A."/>
            <person name="Tromans A."/>
            <person name="Van Helmond Z."/>
            <person name="Wall M."/>
            <person name="Wallis J.M."/>
            <person name="White S."/>
            <person name="Whitehead S.L."/>
            <person name="Wilkinson J.E."/>
            <person name="Willey D.L."/>
            <person name="Williams H."/>
            <person name="Wilming L."/>
            <person name="Wray P.W."/>
            <person name="Wu Z."/>
            <person name="Coulson A."/>
            <person name="Vaudin M."/>
            <person name="Sulston J.E."/>
            <person name="Durbin R.M."/>
            <person name="Hubbard T."/>
            <person name="Wooster R."/>
            <person name="Dunham I."/>
            <person name="Carter N.P."/>
            <person name="McVean G."/>
            <person name="Ross M.T."/>
            <person name="Harrow J."/>
            <person name="Olson M.V."/>
            <person name="Beck S."/>
            <person name="Rogers J."/>
            <person name="Bentley D.R."/>
        </authorList>
    </citation>
    <scope>NUCLEOTIDE SEQUENCE [LARGE SCALE GENOMIC DNA]</scope>
</reference>
<reference key="6">
    <citation type="journal article" date="2004" name="Genome Res.">
        <title>The status, quality, and expansion of the NIH full-length cDNA project: the Mammalian Gene Collection (MGC).</title>
        <authorList>
            <consortium name="The MGC Project Team"/>
        </authorList>
    </citation>
    <scope>NUCLEOTIDE SEQUENCE [LARGE SCALE MRNA]</scope>
    <source>
        <tissue>Brain</tissue>
    </source>
</reference>
<reference key="7">
    <citation type="journal article" date="2009" name="Science">
        <title>Lysine acetylation targets protein complexes and co-regulates major cellular functions.</title>
        <authorList>
            <person name="Choudhary C."/>
            <person name="Kumar C."/>
            <person name="Gnad F."/>
            <person name="Nielsen M.L."/>
            <person name="Rehman M."/>
            <person name="Walther T.C."/>
            <person name="Olsen J.V."/>
            <person name="Mann M."/>
        </authorList>
    </citation>
    <scope>ACETYLATION [LARGE SCALE ANALYSIS] AT LYS-23; LYS-28; LYS-37; LYS-54 AND LYS-57</scope>
    <scope>IDENTIFICATION BY MASS SPECTROMETRY [LARGE SCALE ANALYSIS]</scope>
</reference>
<reference key="8">
    <citation type="journal article" date="2011" name="BMC Syst. Biol.">
        <title>Initial characterization of the human central proteome.</title>
        <authorList>
            <person name="Burkard T.R."/>
            <person name="Planyavsky M."/>
            <person name="Kaupe I."/>
            <person name="Breitwieser F.P."/>
            <person name="Buerckstuemmer T."/>
            <person name="Bennett K.L."/>
            <person name="Superti-Furga G."/>
            <person name="Colinge J."/>
        </authorList>
    </citation>
    <scope>IDENTIFICATION BY MASS SPECTROMETRY [LARGE SCALE ANALYSIS]</scope>
</reference>
<reference key="9">
    <citation type="journal article" date="2014" name="J. Proteomics">
        <title>An enzyme assisted RP-RPLC approach for in-depth analysis of human liver phosphoproteome.</title>
        <authorList>
            <person name="Bian Y."/>
            <person name="Song C."/>
            <person name="Cheng K."/>
            <person name="Dong M."/>
            <person name="Wang F."/>
            <person name="Huang J."/>
            <person name="Sun D."/>
            <person name="Wang L."/>
            <person name="Ye M."/>
            <person name="Zou H."/>
        </authorList>
    </citation>
    <scope>IDENTIFICATION BY MASS SPECTROMETRY [LARGE SCALE ANALYSIS]</scope>
    <source>
        <tissue>Liver</tissue>
    </source>
</reference>
<reference key="10">
    <citation type="journal article" date="2015" name="Proteomics">
        <title>N-terminome analysis of the human mitochondrial proteome.</title>
        <authorList>
            <person name="Vaca Jacome A.S."/>
            <person name="Rabilloud T."/>
            <person name="Schaeffer-Reiss C."/>
            <person name="Rompais M."/>
            <person name="Ayoub D."/>
            <person name="Lane L."/>
            <person name="Bairoch A."/>
            <person name="Van Dorsselaer A."/>
            <person name="Carapito C."/>
        </authorList>
    </citation>
    <scope>IDENTIFICATION BY MASS SPECTROMETRY [LARGE SCALE ANALYSIS]</scope>
</reference>
<reference key="11">
    <citation type="journal article" date="2017" name="Nat. Struct. Mol. Biol.">
        <title>Site-specific mapping of the human SUMO proteome reveals co-modification with phosphorylation.</title>
        <authorList>
            <person name="Hendriks I.A."/>
            <person name="Lyon D."/>
            <person name="Young C."/>
            <person name="Jensen L.J."/>
            <person name="Vertegaal A.C."/>
            <person name="Nielsen M.L."/>
        </authorList>
    </citation>
    <scope>SUMOYLATION [LARGE SCALE ANALYSIS] AT LYS-37</scope>
    <scope>IDENTIFICATION BY MASS SPECTROMETRY [LARGE SCALE ANALYSIS]</scope>
</reference>
<reference key="12">
    <citation type="journal article" date="1999" name="Nat. Struct. Biol.">
        <title>The crystal structure of a complex of p11 with the annexin II N-terminal peptide.</title>
        <authorList>
            <person name="Rety S."/>
            <person name="Sopkova J."/>
            <person name="Renouard M."/>
            <person name="Osterloh D."/>
            <person name="Gerke V."/>
            <person name="Tabaries S."/>
            <person name="Russo-Marie F."/>
            <person name="Lewit-Bentley A."/>
        </authorList>
    </citation>
    <scope>X-RAY CRYSTALLOGRAPHY (2.25 ANGSTROMS)</scope>
    <scope>SUBUNIT</scope>
</reference>
<protein>
    <recommendedName>
        <fullName>Protein S100-A10</fullName>
    </recommendedName>
    <alternativeName>
        <fullName>Calpactin I light chain</fullName>
    </alternativeName>
    <alternativeName>
        <fullName>Calpactin-1 light chain</fullName>
    </alternativeName>
    <alternativeName>
        <fullName>Cellular ligand of annexin II</fullName>
    </alternativeName>
    <alternativeName>
        <fullName>S100 calcium-binding protein A10</fullName>
    </alternativeName>
    <alternativeName>
        <fullName>p10 protein</fullName>
    </alternativeName>
    <alternativeName>
        <fullName>p11</fullName>
    </alternativeName>
</protein>
<keyword id="KW-0002">3D-structure</keyword>
<keyword id="KW-0007">Acetylation</keyword>
<keyword id="KW-1017">Isopeptide bond</keyword>
<keyword id="KW-1267">Proteomics identification</keyword>
<keyword id="KW-1185">Reference proteome</keyword>
<keyword id="KW-0832">Ubl conjugation</keyword>
<dbReference type="EMBL" id="M81457">
    <property type="protein sequence ID" value="AAA58404.1"/>
    <property type="molecule type" value="mRNA"/>
</dbReference>
<dbReference type="EMBL" id="M38591">
    <property type="protein sequence ID" value="AAA58426.1"/>
    <property type="molecule type" value="mRNA"/>
</dbReference>
<dbReference type="EMBL" id="M77483">
    <property type="status" value="NOT_ANNOTATED_CDS"/>
    <property type="molecule type" value="Genomic_DNA"/>
</dbReference>
<dbReference type="EMBL" id="AK291073">
    <property type="protein sequence ID" value="BAF83762.1"/>
    <property type="molecule type" value="mRNA"/>
</dbReference>
<dbReference type="EMBL" id="AL450992">
    <property type="status" value="NOT_ANNOTATED_CDS"/>
    <property type="molecule type" value="Genomic_DNA"/>
</dbReference>
<dbReference type="EMBL" id="BC015973">
    <property type="protein sequence ID" value="AAH15973.1"/>
    <property type="molecule type" value="mRNA"/>
</dbReference>
<dbReference type="EMBL" id="BC105786">
    <property type="protein sequence ID" value="AAI05787.1"/>
    <property type="molecule type" value="mRNA"/>
</dbReference>
<dbReference type="CCDS" id="CCDS1008.1"/>
<dbReference type="PIR" id="JC1139">
    <property type="entry name" value="JC1139"/>
</dbReference>
<dbReference type="RefSeq" id="NP_002957.1">
    <property type="nucleotide sequence ID" value="NM_002966.3"/>
</dbReference>
<dbReference type="PDB" id="1A4P">
    <property type="method" value="X-ray"/>
    <property type="resolution" value="2.25 A"/>
    <property type="chains" value="A/B=2-97"/>
</dbReference>
<dbReference type="PDB" id="1BT6">
    <property type="method" value="X-ray"/>
    <property type="resolution" value="2.40 A"/>
    <property type="chains" value="A/B=2-97"/>
</dbReference>
<dbReference type="PDB" id="4DRW">
    <property type="method" value="X-ray"/>
    <property type="resolution" value="3.50 A"/>
    <property type="chains" value="A/B/C/D=1-93"/>
</dbReference>
<dbReference type="PDB" id="4FTG">
    <property type="method" value="X-ray"/>
    <property type="resolution" value="2.51 A"/>
    <property type="chains" value="A/B=2-97"/>
</dbReference>
<dbReference type="PDB" id="4HRE">
    <property type="method" value="X-ray"/>
    <property type="resolution" value="2.79 A"/>
    <property type="chains" value="E/F/I/J=2-97"/>
</dbReference>
<dbReference type="PDB" id="4HRG">
    <property type="method" value="X-ray"/>
    <property type="resolution" value="2.00 A"/>
    <property type="chains" value="A/B=1-93"/>
</dbReference>
<dbReference type="PDB" id="4HRH">
    <property type="method" value="X-ray"/>
    <property type="resolution" value="3.00 A"/>
    <property type="chains" value="A/B=1-93"/>
</dbReference>
<dbReference type="PDBsum" id="1A4P"/>
<dbReference type="PDBsum" id="1BT6"/>
<dbReference type="PDBsum" id="4DRW"/>
<dbReference type="PDBsum" id="4FTG"/>
<dbReference type="PDBsum" id="4HRE"/>
<dbReference type="PDBsum" id="4HRG"/>
<dbReference type="PDBsum" id="4HRH"/>
<dbReference type="SMR" id="P60903"/>
<dbReference type="BioGRID" id="112189">
    <property type="interactions" value="128"/>
</dbReference>
<dbReference type="ComplexPortal" id="CPX-850">
    <property type="entry name" value="AHNAK - Annexin A2 - S100-A10 complex"/>
</dbReference>
<dbReference type="ComplexPortal" id="CPX-853">
    <property type="entry name" value="Annexin A2 - S100-A10 complex"/>
</dbReference>
<dbReference type="ComplexPortal" id="CPX-856">
    <property type="entry name" value="SMARCA3 - Annexin A2 - S100-A10 complex"/>
</dbReference>
<dbReference type="FunCoup" id="P60903">
    <property type="interactions" value="239"/>
</dbReference>
<dbReference type="IntAct" id="P60903">
    <property type="interactions" value="62"/>
</dbReference>
<dbReference type="MINT" id="P60903"/>
<dbReference type="STRING" id="9606.ENSP00000357801"/>
<dbReference type="DrugBank" id="DB12695">
    <property type="generic name" value="Phenethyl Isothiocyanate"/>
</dbReference>
<dbReference type="TCDB" id="8.A.81.1.2">
    <property type="family name" value="the s100 calcium-binding protein (s100) family"/>
</dbReference>
<dbReference type="GlyGen" id="P60903">
    <property type="glycosylation" value="1 site, 1 O-linked glycan (1 site)"/>
</dbReference>
<dbReference type="iPTMnet" id="P60903"/>
<dbReference type="MetOSite" id="P60903"/>
<dbReference type="PhosphoSitePlus" id="P60903"/>
<dbReference type="SwissPalm" id="P60903"/>
<dbReference type="BioMuta" id="S100A10"/>
<dbReference type="DMDM" id="46397706"/>
<dbReference type="jPOST" id="P60903"/>
<dbReference type="MassIVE" id="P60903"/>
<dbReference type="PaxDb" id="9606-ENSP00000357801"/>
<dbReference type="PeptideAtlas" id="P60903"/>
<dbReference type="ProteomicsDB" id="57237"/>
<dbReference type="Pumba" id="P60903"/>
<dbReference type="TopDownProteomics" id="P60903"/>
<dbReference type="Antibodypedia" id="1093">
    <property type="antibodies" value="514 antibodies from 39 providers"/>
</dbReference>
<dbReference type="DNASU" id="6281"/>
<dbReference type="Ensembl" id="ENST00000368809.1">
    <property type="protein sequence ID" value="ENSP00000357799.1"/>
    <property type="gene ID" value="ENSG00000197747.9"/>
</dbReference>
<dbReference type="Ensembl" id="ENST00000368811.8">
    <property type="protein sequence ID" value="ENSP00000357801.3"/>
    <property type="gene ID" value="ENSG00000197747.9"/>
</dbReference>
<dbReference type="GeneID" id="6281"/>
<dbReference type="KEGG" id="hsa:6281"/>
<dbReference type="MANE-Select" id="ENST00000368811.8">
    <property type="protein sequence ID" value="ENSP00000357801.3"/>
    <property type="RefSeq nucleotide sequence ID" value="NM_002966.3"/>
    <property type="RefSeq protein sequence ID" value="NP_002957.1"/>
</dbReference>
<dbReference type="UCSC" id="uc001ezl.4">
    <property type="organism name" value="human"/>
</dbReference>
<dbReference type="AGR" id="HGNC:10487"/>
<dbReference type="CTD" id="6281"/>
<dbReference type="DisGeNET" id="6281"/>
<dbReference type="GeneCards" id="S100A10"/>
<dbReference type="HGNC" id="HGNC:10487">
    <property type="gene designation" value="S100A10"/>
</dbReference>
<dbReference type="HPA" id="ENSG00000197747">
    <property type="expression patterns" value="Tissue enhanced (esophagus)"/>
</dbReference>
<dbReference type="MIM" id="114085">
    <property type="type" value="gene"/>
</dbReference>
<dbReference type="neXtProt" id="NX_P60903"/>
<dbReference type="OpenTargets" id="ENSG00000197747"/>
<dbReference type="PharmGKB" id="PA34899"/>
<dbReference type="VEuPathDB" id="HostDB:ENSG00000197747"/>
<dbReference type="eggNOG" id="ENOG502S6TB">
    <property type="taxonomic scope" value="Eukaryota"/>
</dbReference>
<dbReference type="GeneTree" id="ENSGT00940000154197"/>
<dbReference type="HOGENOM" id="CLU_138624_2_1_1"/>
<dbReference type="InParanoid" id="P60903"/>
<dbReference type="OMA" id="VACEQCY"/>
<dbReference type="OrthoDB" id="26525at2759"/>
<dbReference type="PAN-GO" id="P60903">
    <property type="GO annotations" value="5 GO annotations based on evolutionary models"/>
</dbReference>
<dbReference type="PhylomeDB" id="P60903"/>
<dbReference type="TreeFam" id="TF332727"/>
<dbReference type="PathwayCommons" id="P60903"/>
<dbReference type="Reactome" id="R-HSA-75205">
    <property type="pathway name" value="Dissolution of Fibrin Clot"/>
</dbReference>
<dbReference type="SignaLink" id="P60903"/>
<dbReference type="SIGNOR" id="P60903"/>
<dbReference type="BioGRID-ORCS" id="6281">
    <property type="hits" value="20 hits in 1155 CRISPR screens"/>
</dbReference>
<dbReference type="ChiTaRS" id="S100A10">
    <property type="organism name" value="human"/>
</dbReference>
<dbReference type="EvolutionaryTrace" id="P60903"/>
<dbReference type="GeneWiki" id="S100A10"/>
<dbReference type="GenomeRNAi" id="6281"/>
<dbReference type="Pharos" id="P60903">
    <property type="development level" value="Tbio"/>
</dbReference>
<dbReference type="PRO" id="PR:P60903"/>
<dbReference type="Proteomes" id="UP000005640">
    <property type="component" value="Chromosome 1"/>
</dbReference>
<dbReference type="RNAct" id="P60903">
    <property type="molecule type" value="protein"/>
</dbReference>
<dbReference type="Bgee" id="ENSG00000197747">
    <property type="expression patterns" value="Expressed in mucosa of sigmoid colon and 214 other cell types or tissues"/>
</dbReference>
<dbReference type="GO" id="GO:1990665">
    <property type="term" value="C:AnxA2-p11 complex"/>
    <property type="evidence" value="ECO:0000314"/>
    <property type="project" value="UniProtKB"/>
</dbReference>
<dbReference type="GO" id="GO:0009986">
    <property type="term" value="C:cell surface"/>
    <property type="evidence" value="ECO:0007669"/>
    <property type="project" value="Ensembl"/>
</dbReference>
<dbReference type="GO" id="GO:0062023">
    <property type="term" value="C:collagen-containing extracellular matrix"/>
    <property type="evidence" value="ECO:0007005"/>
    <property type="project" value="BHF-UCL"/>
</dbReference>
<dbReference type="GO" id="GO:0005737">
    <property type="term" value="C:cytoplasm"/>
    <property type="evidence" value="ECO:0000318"/>
    <property type="project" value="GO_Central"/>
</dbReference>
<dbReference type="GO" id="GO:0070062">
    <property type="term" value="C:extracellular exosome"/>
    <property type="evidence" value="ECO:0007005"/>
    <property type="project" value="UniProtKB"/>
</dbReference>
<dbReference type="GO" id="GO:0005576">
    <property type="term" value="C:extracellular region"/>
    <property type="evidence" value="ECO:0007005"/>
    <property type="project" value="BHF-UCL"/>
</dbReference>
<dbReference type="GO" id="GO:0016363">
    <property type="term" value="C:nuclear matrix"/>
    <property type="evidence" value="ECO:0000303"/>
    <property type="project" value="ComplexPortal"/>
</dbReference>
<dbReference type="GO" id="GO:0005886">
    <property type="term" value="C:plasma membrane"/>
    <property type="evidence" value="ECO:0000314"/>
    <property type="project" value="ComplexPortal"/>
</dbReference>
<dbReference type="GO" id="GO:0098797">
    <property type="term" value="C:plasma membrane protein complex"/>
    <property type="evidence" value="ECO:0000353"/>
    <property type="project" value="ComplexPortal"/>
</dbReference>
<dbReference type="GO" id="GO:0090575">
    <property type="term" value="C:RNA polymerase II transcription regulator complex"/>
    <property type="evidence" value="ECO:0000269"/>
    <property type="project" value="ComplexPortal"/>
</dbReference>
<dbReference type="GO" id="GO:0005509">
    <property type="term" value="F:calcium ion binding"/>
    <property type="evidence" value="ECO:0000318"/>
    <property type="project" value="GO_Central"/>
</dbReference>
<dbReference type="GO" id="GO:0048306">
    <property type="term" value="F:calcium-dependent protein binding"/>
    <property type="evidence" value="ECO:0000318"/>
    <property type="project" value="GO_Central"/>
</dbReference>
<dbReference type="GO" id="GO:0042803">
    <property type="term" value="F:protein homodimerization activity"/>
    <property type="evidence" value="ECO:0000314"/>
    <property type="project" value="UniProtKB"/>
</dbReference>
<dbReference type="GO" id="GO:0044325">
    <property type="term" value="F:transmembrane transporter binding"/>
    <property type="evidence" value="ECO:0000353"/>
    <property type="project" value="UniProtKB"/>
</dbReference>
<dbReference type="GO" id="GO:0001765">
    <property type="term" value="P:membrane raft assembly"/>
    <property type="evidence" value="ECO:0000314"/>
    <property type="project" value="UniProtKB"/>
</dbReference>
<dbReference type="GO" id="GO:0042789">
    <property type="term" value="P:mRNA transcription by RNA polymerase II"/>
    <property type="evidence" value="ECO:0000266"/>
    <property type="project" value="ComplexPortal"/>
</dbReference>
<dbReference type="GO" id="GO:0045921">
    <property type="term" value="P:positive regulation of exocytosis"/>
    <property type="evidence" value="ECO:0000303"/>
    <property type="project" value="ComplexPortal"/>
</dbReference>
<dbReference type="GO" id="GO:0051894">
    <property type="term" value="P:positive regulation of focal adhesion assembly"/>
    <property type="evidence" value="ECO:0000315"/>
    <property type="project" value="UniProtKB"/>
</dbReference>
<dbReference type="GO" id="GO:0043547">
    <property type="term" value="P:positive regulation of GTPase activity"/>
    <property type="evidence" value="ECO:0000315"/>
    <property type="project" value="UniProtKB"/>
</dbReference>
<dbReference type="GO" id="GO:1905686">
    <property type="term" value="P:positive regulation of plasma membrane repair"/>
    <property type="evidence" value="ECO:0000303"/>
    <property type="project" value="ComplexPortal"/>
</dbReference>
<dbReference type="GO" id="GO:0010756">
    <property type="term" value="P:positive regulation of plasminogen activation"/>
    <property type="evidence" value="ECO:0000314"/>
    <property type="project" value="ComplexPortal"/>
</dbReference>
<dbReference type="GO" id="GO:0051496">
    <property type="term" value="P:positive regulation of stress fiber assembly"/>
    <property type="evidence" value="ECO:0000315"/>
    <property type="project" value="UniProtKB"/>
</dbReference>
<dbReference type="GO" id="GO:1900026">
    <property type="term" value="P:positive regulation of substrate adhesion-dependent cell spreading"/>
    <property type="evidence" value="ECO:0000315"/>
    <property type="project" value="UniProtKB"/>
</dbReference>
<dbReference type="GO" id="GO:0045944">
    <property type="term" value="P:positive regulation of transcription by RNA polymerase II"/>
    <property type="evidence" value="ECO:0000266"/>
    <property type="project" value="ComplexPortal"/>
</dbReference>
<dbReference type="GO" id="GO:0072659">
    <property type="term" value="P:protein localization to plasma membrane"/>
    <property type="evidence" value="ECO:0000314"/>
    <property type="project" value="UniProtKB"/>
</dbReference>
<dbReference type="GO" id="GO:0050767">
    <property type="term" value="P:regulation of neurogenesis"/>
    <property type="evidence" value="ECO:0000266"/>
    <property type="project" value="ComplexPortal"/>
</dbReference>
<dbReference type="GO" id="GO:0006900">
    <property type="term" value="P:vesicle budding from membrane"/>
    <property type="evidence" value="ECO:0000314"/>
    <property type="project" value="UniProtKB"/>
</dbReference>
<dbReference type="CDD" id="cd05024">
    <property type="entry name" value="S-100A10"/>
    <property type="match status" value="1"/>
</dbReference>
<dbReference type="FunFam" id="1.10.238.10:FF:000167">
    <property type="entry name" value="Protein S100-A10"/>
    <property type="match status" value="1"/>
</dbReference>
<dbReference type="Gene3D" id="1.10.238.10">
    <property type="entry name" value="EF-hand"/>
    <property type="match status" value="1"/>
</dbReference>
<dbReference type="InterPro" id="IPR011992">
    <property type="entry name" value="EF-hand-dom_pair"/>
</dbReference>
<dbReference type="InterPro" id="IPR028476">
    <property type="entry name" value="S100-A10"/>
</dbReference>
<dbReference type="InterPro" id="IPR001751">
    <property type="entry name" value="S100/CaBP7/8-like_CS"/>
</dbReference>
<dbReference type="InterPro" id="IPR013787">
    <property type="entry name" value="S100_Ca-bd_sub"/>
</dbReference>
<dbReference type="PANTHER" id="PTHR11639:SF74">
    <property type="entry name" value="PROTEIN S100-A10"/>
    <property type="match status" value="1"/>
</dbReference>
<dbReference type="PANTHER" id="PTHR11639">
    <property type="entry name" value="S100 CALCIUM-BINDING PROTEIN"/>
    <property type="match status" value="1"/>
</dbReference>
<dbReference type="Pfam" id="PF01023">
    <property type="entry name" value="S_100"/>
    <property type="match status" value="1"/>
</dbReference>
<dbReference type="SMART" id="SM01394">
    <property type="entry name" value="S_100"/>
    <property type="match status" value="1"/>
</dbReference>
<dbReference type="SUPFAM" id="SSF47473">
    <property type="entry name" value="EF-hand"/>
    <property type="match status" value="1"/>
</dbReference>
<dbReference type="PROSITE" id="PS00303">
    <property type="entry name" value="S100_CABP"/>
    <property type="match status" value="1"/>
</dbReference>
<organism>
    <name type="scientific">Homo sapiens</name>
    <name type="common">Human</name>
    <dbReference type="NCBI Taxonomy" id="9606"/>
    <lineage>
        <taxon>Eukaryota</taxon>
        <taxon>Metazoa</taxon>
        <taxon>Chordata</taxon>
        <taxon>Craniata</taxon>
        <taxon>Vertebrata</taxon>
        <taxon>Euteleostomi</taxon>
        <taxon>Mammalia</taxon>
        <taxon>Eutheria</taxon>
        <taxon>Euarchontoglires</taxon>
        <taxon>Primates</taxon>
        <taxon>Haplorrhini</taxon>
        <taxon>Catarrhini</taxon>
        <taxon>Hominidae</taxon>
        <taxon>Homo</taxon>
    </lineage>
</organism>